<dbReference type="EMBL" id="BX284602">
    <property type="protein sequence ID" value="CAA90255.1"/>
    <property type="molecule type" value="Genomic_DNA"/>
</dbReference>
<dbReference type="PIR" id="T22635">
    <property type="entry name" value="T22635"/>
</dbReference>
<dbReference type="RefSeq" id="NP_495816.1">
    <property type="nucleotide sequence ID" value="NM_063415.7"/>
</dbReference>
<dbReference type="SMR" id="Q20758"/>
<dbReference type="BioGRID" id="39703">
    <property type="interactions" value="4"/>
</dbReference>
<dbReference type="FunCoup" id="Q20758">
    <property type="interactions" value="1995"/>
</dbReference>
<dbReference type="STRING" id="6239.F54C9.10.2"/>
<dbReference type="PaxDb" id="6239-F54C9.10.2"/>
<dbReference type="PeptideAtlas" id="Q20758"/>
<dbReference type="EnsemblMetazoa" id="F54C9.10.1">
    <property type="protein sequence ID" value="F54C9.10.1"/>
    <property type="gene ID" value="WBGene00000187"/>
</dbReference>
<dbReference type="GeneID" id="174375"/>
<dbReference type="KEGG" id="cel:CELE_F54C9.10"/>
<dbReference type="UCSC" id="F54C9.10.1">
    <property type="organism name" value="c. elegans"/>
</dbReference>
<dbReference type="AGR" id="WB:WBGene00000187"/>
<dbReference type="CTD" id="174375"/>
<dbReference type="WormBase" id="F54C9.10">
    <property type="protein sequence ID" value="CE02250"/>
    <property type="gene ID" value="WBGene00000187"/>
    <property type="gene designation" value="arl-1"/>
</dbReference>
<dbReference type="eggNOG" id="KOG0072">
    <property type="taxonomic scope" value="Eukaryota"/>
</dbReference>
<dbReference type="GeneTree" id="ENSGT00940000155118"/>
<dbReference type="HOGENOM" id="CLU_040729_9_3_1"/>
<dbReference type="InParanoid" id="Q20758"/>
<dbReference type="OMA" id="MGAGMSW"/>
<dbReference type="OrthoDB" id="2011769at2759"/>
<dbReference type="PhylomeDB" id="Q20758"/>
<dbReference type="Reactome" id="R-CEL-6811440">
    <property type="pathway name" value="Retrograde transport at the Trans-Golgi-Network"/>
</dbReference>
<dbReference type="PRO" id="PR:Q20758"/>
<dbReference type="Proteomes" id="UP000001940">
    <property type="component" value="Chromosome II"/>
</dbReference>
<dbReference type="Bgee" id="WBGene00000187">
    <property type="expression patterns" value="Expressed in germ line (C elegans) and 4 other cell types or tissues"/>
</dbReference>
<dbReference type="GO" id="GO:0005737">
    <property type="term" value="C:cytoplasm"/>
    <property type="evidence" value="ECO:0000318"/>
    <property type="project" value="GO_Central"/>
</dbReference>
<dbReference type="GO" id="GO:0005794">
    <property type="term" value="C:Golgi apparatus"/>
    <property type="evidence" value="ECO:0000318"/>
    <property type="project" value="GO_Central"/>
</dbReference>
<dbReference type="GO" id="GO:0005525">
    <property type="term" value="F:GTP binding"/>
    <property type="evidence" value="ECO:0000318"/>
    <property type="project" value="GO_Central"/>
</dbReference>
<dbReference type="GO" id="GO:0003924">
    <property type="term" value="F:GTPase activity"/>
    <property type="evidence" value="ECO:0007669"/>
    <property type="project" value="InterPro"/>
</dbReference>
<dbReference type="GO" id="GO:0006886">
    <property type="term" value="P:intracellular protein transport"/>
    <property type="evidence" value="ECO:0000318"/>
    <property type="project" value="GO_Central"/>
</dbReference>
<dbReference type="GO" id="GO:0110039">
    <property type="term" value="P:positive regulation of nematode male tail tip morphogenesis"/>
    <property type="evidence" value="ECO:0000315"/>
    <property type="project" value="UniProtKB"/>
</dbReference>
<dbReference type="GO" id="GO:0016192">
    <property type="term" value="P:vesicle-mediated transport"/>
    <property type="evidence" value="ECO:0000318"/>
    <property type="project" value="GO_Central"/>
</dbReference>
<dbReference type="CDD" id="cd04151">
    <property type="entry name" value="Arl1"/>
    <property type="match status" value="1"/>
</dbReference>
<dbReference type="FunFam" id="3.40.50.300:FF:000306">
    <property type="entry name" value="ADP-ribosylation factor-like protein 1"/>
    <property type="match status" value="1"/>
</dbReference>
<dbReference type="Gene3D" id="3.40.50.300">
    <property type="entry name" value="P-loop containing nucleotide triphosphate hydrolases"/>
    <property type="match status" value="1"/>
</dbReference>
<dbReference type="InterPro" id="IPR027417">
    <property type="entry name" value="P-loop_NTPase"/>
</dbReference>
<dbReference type="InterPro" id="IPR005225">
    <property type="entry name" value="Small_GTP-bd"/>
</dbReference>
<dbReference type="InterPro" id="IPR024156">
    <property type="entry name" value="Small_GTPase_ARF"/>
</dbReference>
<dbReference type="InterPro" id="IPR006689">
    <property type="entry name" value="Small_GTPase_ARF/SAR"/>
</dbReference>
<dbReference type="NCBIfam" id="TIGR00231">
    <property type="entry name" value="small_GTP"/>
    <property type="match status" value="1"/>
</dbReference>
<dbReference type="PANTHER" id="PTHR11711">
    <property type="entry name" value="ADP RIBOSYLATION FACTOR-RELATED"/>
    <property type="match status" value="1"/>
</dbReference>
<dbReference type="Pfam" id="PF00025">
    <property type="entry name" value="Arf"/>
    <property type="match status" value="1"/>
</dbReference>
<dbReference type="PRINTS" id="PR00328">
    <property type="entry name" value="SAR1GTPBP"/>
</dbReference>
<dbReference type="SMART" id="SM00177">
    <property type="entry name" value="ARF"/>
    <property type="match status" value="1"/>
</dbReference>
<dbReference type="SMART" id="SM00175">
    <property type="entry name" value="RAB"/>
    <property type="match status" value="1"/>
</dbReference>
<dbReference type="SMART" id="SM00178">
    <property type="entry name" value="SAR"/>
    <property type="match status" value="1"/>
</dbReference>
<dbReference type="SUPFAM" id="SSF52540">
    <property type="entry name" value="P-loop containing nucleoside triphosphate hydrolases"/>
    <property type="match status" value="1"/>
</dbReference>
<dbReference type="PROSITE" id="PS51417">
    <property type="entry name" value="ARF"/>
    <property type="match status" value="1"/>
</dbReference>
<accession>Q20758</accession>
<organism>
    <name type="scientific">Caenorhabditis elegans</name>
    <dbReference type="NCBI Taxonomy" id="6239"/>
    <lineage>
        <taxon>Eukaryota</taxon>
        <taxon>Metazoa</taxon>
        <taxon>Ecdysozoa</taxon>
        <taxon>Nematoda</taxon>
        <taxon>Chromadorea</taxon>
        <taxon>Rhabditida</taxon>
        <taxon>Rhabditina</taxon>
        <taxon>Rhabditomorpha</taxon>
        <taxon>Rhabditoidea</taxon>
        <taxon>Rhabditidae</taxon>
        <taxon>Peloderinae</taxon>
        <taxon>Caenorhabditis</taxon>
    </lineage>
</organism>
<reference key="1">
    <citation type="journal article" date="1998" name="Science">
        <title>Genome sequence of the nematode C. elegans: a platform for investigating biology.</title>
        <authorList>
            <consortium name="The C. elegans sequencing consortium"/>
        </authorList>
    </citation>
    <scope>NUCLEOTIDE SEQUENCE [LARGE SCALE GENOMIC DNA]</scope>
    <source>
        <strain>Bristol N2</strain>
    </source>
</reference>
<reference key="2">
    <citation type="journal article" date="2011" name="PLoS Genet.">
        <title>A bow-tie genetic architecture for morphogenesis suggested by a genome-wide RNAi screen in Caenorhabditis elegans.</title>
        <authorList>
            <person name="Nelson M.D."/>
            <person name="Zhou E."/>
            <person name="Kiontke K."/>
            <person name="Fradin H."/>
            <person name="Maldonado G."/>
            <person name="Martin D."/>
            <person name="Shah K."/>
            <person name="Fitch D.H."/>
        </authorList>
    </citation>
    <scope>FUNCTION</scope>
    <scope>SUBCELLULAR LOCATION</scope>
    <scope>TISSUE SPECIFICITY</scope>
    <scope>DEVELOPMENTAL STAGE</scope>
    <scope>DISRUPTION PHENOTYPE</scope>
</reference>
<feature type="initiator methionine" description="Removed" evidence="2">
    <location>
        <position position="1"/>
    </location>
</feature>
<feature type="chain" id="PRO_0000207406" description="ADP-ribosylation factor-like protein 1">
    <location>
        <begin position="2"/>
        <end position="180"/>
    </location>
</feature>
<feature type="binding site" evidence="1">
    <location>
        <begin position="23"/>
        <end position="30"/>
    </location>
    <ligand>
        <name>GTP</name>
        <dbReference type="ChEBI" id="CHEBI:37565"/>
    </ligand>
</feature>
<feature type="binding site" evidence="1">
    <location>
        <begin position="66"/>
        <end position="70"/>
    </location>
    <ligand>
        <name>GTP</name>
        <dbReference type="ChEBI" id="CHEBI:37565"/>
    </ligand>
</feature>
<feature type="binding site" evidence="1">
    <location>
        <begin position="125"/>
        <end position="128"/>
    </location>
    <ligand>
        <name>GTP</name>
        <dbReference type="ChEBI" id="CHEBI:37565"/>
    </ligand>
</feature>
<feature type="lipid moiety-binding region" description="N-myristoyl glycine" evidence="2">
    <location>
        <position position="2"/>
    </location>
</feature>
<protein>
    <recommendedName>
        <fullName>ADP-ribosylation factor-like protein 1</fullName>
    </recommendedName>
</protein>
<comment type="function">
    <text evidence="1 3">GTP-binding protein that may be involved in protein trafficking; may modulate vesicle budding and uncoating within the Golgi apparatus. Plays a role in male tail tip morphogenesis (PubMed:21408209).</text>
</comment>
<comment type="subcellular location">
    <subcellularLocation>
        <location evidence="1">Golgi apparatus</location>
    </subcellularLocation>
    <subcellularLocation>
        <location evidence="3">Cytoplasm</location>
    </subcellularLocation>
    <subcellularLocation>
        <location evidence="3">Cytoplasmic granule</location>
    </subcellularLocation>
    <text evidence="3">Localizes to cytoplasmic granules (puncta) during the later stage of male tail tip retraction.</text>
</comment>
<comment type="tissue specificity">
    <text evidence="3">Expressed in neuronal cells (PubMed:21408209). Expression in hypodermal tissues is absent (PubMed:21408209).</text>
</comment>
<comment type="developmental stage">
    <text evidence="3">Expressed at low levels in hyp8-11 tail tip cells during the early L4 larval stage (PubMed:21408209). Occassionally, expression is high in hyp10 tail top cells during this time (PubMed:21408209).</text>
</comment>
<comment type="disruption phenotype">
    <text evidence="3">RNAi-mediated knockdown results in male tail tip defects.</text>
</comment>
<comment type="similarity">
    <text evidence="4">Belongs to the small GTPase superfamily. Arf family.</text>
</comment>
<evidence type="ECO:0000250" key="1"/>
<evidence type="ECO:0000255" key="2"/>
<evidence type="ECO:0000269" key="3">
    <source>
    </source>
</evidence>
<evidence type="ECO:0000305" key="4"/>
<evidence type="ECO:0000312" key="5">
    <source>
        <dbReference type="WormBase" id="F54C9.10"/>
    </source>
</evidence>
<proteinExistence type="evidence at transcript level"/>
<sequence length="180" mass="20104">MGGVMSYFRGLFGAREMRILILGLDGAGKTTILYRLQVGEVVTTIPTIGFNVEQVEYKNLKFQVWDLGGQTSIRPYWRCYYANTDAIIYVVDSADRDRVGISRQELATMLQEDELQGAVLAVLANKQDIAGCLTETEVYKALGLDALRNRTIQIFKTSASKGEGLDPAMDWLANQLQQKK</sequence>
<name>ARL1_CAEEL</name>
<keyword id="KW-0963">Cytoplasm</keyword>
<keyword id="KW-0931">ER-Golgi transport</keyword>
<keyword id="KW-0333">Golgi apparatus</keyword>
<keyword id="KW-0342">GTP-binding</keyword>
<keyword id="KW-0449">Lipoprotein</keyword>
<keyword id="KW-0519">Myristate</keyword>
<keyword id="KW-0547">Nucleotide-binding</keyword>
<keyword id="KW-0653">Protein transport</keyword>
<keyword id="KW-1185">Reference proteome</keyword>
<keyword id="KW-0813">Transport</keyword>
<gene>
    <name evidence="5" type="primary">arl-1</name>
    <name evidence="5" type="ORF">F54C9.10</name>
</gene>